<proteinExistence type="evidence at protein level"/>
<feature type="signal peptide" evidence="1">
    <location>
        <begin position="1"/>
        <end position="20"/>
    </location>
</feature>
<feature type="chain" id="PRO_0000429545" description="Galaxin-2" evidence="1">
    <location>
        <begin position="21"/>
        <end position="275"/>
    </location>
</feature>
<comment type="subcellular location">
    <subcellularLocation>
        <location evidence="5">Secreted</location>
    </subcellularLocation>
</comment>
<comment type="tissue specificity">
    <text evidence="2">Component of the acid-insoluble and acid-soluble organic matrix of the aragonitic skeleton (at protein level).</text>
</comment>
<name>GXN2_ACRMI</name>
<keyword id="KW-0903">Direct protein sequencing</keyword>
<keyword id="KW-0964">Secreted</keyword>
<keyword id="KW-0732">Signal</keyword>
<protein>
    <recommendedName>
        <fullName evidence="3">Galaxin-2</fullName>
    </recommendedName>
</protein>
<organism>
    <name type="scientific">Acropora millepora</name>
    <name type="common">Staghorn coral</name>
    <name type="synonym">Heteropora millepora</name>
    <dbReference type="NCBI Taxonomy" id="45264"/>
    <lineage>
        <taxon>Eukaryota</taxon>
        <taxon>Metazoa</taxon>
        <taxon>Cnidaria</taxon>
        <taxon>Anthozoa</taxon>
        <taxon>Hexacorallia</taxon>
        <taxon>Scleractinia</taxon>
        <taxon>Astrocoeniina</taxon>
        <taxon>Acroporidae</taxon>
        <taxon>Acropora</taxon>
    </lineage>
</organism>
<sequence>MTRFTSIGLCAVLLFNVCSCATLQKDTIASMLKKGNSPRVTRQRRQLPSPCGSLQPGQLCCDSYKYNPVTHLCCNDNPAVKPASPTAIPGCCDQSAYDRNTHLCCDATLSPHPPATTLPACCGPVVYDSSVNSTQLCCAGAVLNKPVGVPRALCCGTATYNPATQVCCMGFPVPKAGGPNATSLCCGPFSYDISTQMCCNGNIALKSATHTHCCGMFSFNPATHLCCNGYPYPKLGFISPSCCGSLVYDTLTMRCCDGSHVVLITPNQDPCANLA</sequence>
<evidence type="ECO:0000255" key="1"/>
<evidence type="ECO:0000269" key="2">
    <source>
    </source>
</evidence>
<evidence type="ECO:0000303" key="3">
    <source>
    </source>
</evidence>
<evidence type="ECO:0000305" key="4"/>
<evidence type="ECO:0000305" key="5">
    <source>
    </source>
</evidence>
<dbReference type="EMBL" id="JR976690">
    <property type="status" value="NOT_ANNOTATED_CDS"/>
    <property type="molecule type" value="mRNA"/>
</dbReference>
<dbReference type="RefSeq" id="XP_029187997.1">
    <property type="nucleotide sequence ID" value="XM_029332164.2"/>
</dbReference>
<dbReference type="EnsemblMetazoa" id="XM_029332164.2">
    <property type="protein sequence ID" value="XP_029187997.1"/>
    <property type="gene ID" value="LOC114955334"/>
</dbReference>
<dbReference type="GeneID" id="114955334"/>
<dbReference type="OrthoDB" id="5980475at2759"/>
<dbReference type="GO" id="GO:0005576">
    <property type="term" value="C:extracellular region"/>
    <property type="evidence" value="ECO:0007669"/>
    <property type="project" value="UniProtKB-SubCell"/>
</dbReference>
<dbReference type="InterPro" id="IPR055284">
    <property type="entry name" value="Galaxin-like"/>
</dbReference>
<dbReference type="InterPro" id="IPR056601">
    <property type="entry name" value="Galaxin_dom"/>
</dbReference>
<dbReference type="PANTHER" id="PTHR34490:SF1">
    <property type="entry name" value="GALAXIN-LIKE"/>
    <property type="match status" value="1"/>
</dbReference>
<dbReference type="PANTHER" id="PTHR34490">
    <property type="entry name" value="PROTEIN CBG12054-RELATED"/>
    <property type="match status" value="1"/>
</dbReference>
<dbReference type="Pfam" id="PF24748">
    <property type="entry name" value="Galaxin_repeat"/>
    <property type="match status" value="2"/>
</dbReference>
<reference evidence="4" key="1">
    <citation type="journal article" date="2012" name="Mol. Ecol.">
        <title>Whole transcriptome analysis of the coral Acropora millepora reveals complex responses to CO(2)-driven acidification during the initiation of calcification.</title>
        <authorList>
            <person name="Moya A."/>
            <person name="Huisman L."/>
            <person name="Ball E.E."/>
            <person name="Hayward D.C."/>
            <person name="Grasso L.C."/>
            <person name="Chua C.M."/>
            <person name="Woo H.N."/>
            <person name="Gattuso J.P."/>
            <person name="Foret S."/>
            <person name="Miller D.J."/>
        </authorList>
    </citation>
    <scope>NUCLEOTIDE SEQUENCE [MRNA]</scope>
</reference>
<reference evidence="4" key="2">
    <citation type="journal article" date="2013" name="Mol. Biol. Evol.">
        <title>The skeletal proteome of the coral Acropora millepora: the evolution of calcification by co-option and domain shuffling.</title>
        <authorList>
            <person name="Ramos-Silva P."/>
            <person name="Kaandorp J."/>
            <person name="Huisman L."/>
            <person name="Marie B."/>
            <person name="Zanella-Cleon I."/>
            <person name="Guichard N."/>
            <person name="Miller D.J."/>
            <person name="Marin F."/>
        </authorList>
    </citation>
    <scope>PROTEIN SEQUENCE OF 151-176 AND 234-255</scope>
    <scope>TISSUE SPECIFICITY</scope>
    <scope>IDENTIFICATION BY MASS SPECTROMETRY</scope>
</reference>
<accession>B8UU51</accession>